<accession>P0DN52</accession>
<proteinExistence type="inferred from homology"/>
<keyword id="KW-1015">Disulfide bond</keyword>
<keyword id="KW-0964">Secreted</keyword>
<keyword id="KW-0732">Signal</keyword>
<keyword id="KW-0800">Toxin</keyword>
<organism>
    <name type="scientific">Terebra anilis</name>
    <name type="common">Auger snail</name>
    <name type="synonym">Cinguloterebra anilis</name>
    <dbReference type="NCBI Taxonomy" id="553697"/>
    <lineage>
        <taxon>Eukaryota</taxon>
        <taxon>Metazoa</taxon>
        <taxon>Spiralia</taxon>
        <taxon>Lophotrochozoa</taxon>
        <taxon>Mollusca</taxon>
        <taxon>Gastropoda</taxon>
        <taxon>Caenogastropoda</taxon>
        <taxon>Neogastropoda</taxon>
        <taxon>Conoidea</taxon>
        <taxon>Terebridae</taxon>
        <taxon>Terebra</taxon>
    </lineage>
</organism>
<sequence length="91" mass="9604">MATSGRLLCVCLVLGLVFGSLGYPVMEKKRAGKNFDLGTIANWAWQIGEKGGEIIDAIGTSNVPCGDGTCQFGCCEDDRCEDLGCDTFSSS</sequence>
<reference key="1">
    <citation type="journal article" date="2015" name="Genome Biol. Evol.">
        <title>Molecular diversity and gene evolution of the venom arsenal of Terebridae predatory marine snails.</title>
        <authorList>
            <person name="Gorson J."/>
            <person name="Ramrattan G."/>
            <person name="Verdes A."/>
            <person name="Wright E.M."/>
            <person name="Kantor Y."/>
            <person name="Rajaram Srinivasan R."/>
            <person name="Musunuri R."/>
            <person name="Packer D."/>
            <person name="Albano G."/>
            <person name="Qiu W.G."/>
            <person name="Holford M."/>
        </authorList>
    </citation>
    <scope>NUCLEOTIDE SEQUENCE [MRNA]</scope>
    <source>
        <tissue>Venom duct</tissue>
    </source>
</reference>
<feature type="signal peptide" evidence="1">
    <location>
        <begin position="1"/>
        <end position="21"/>
    </location>
</feature>
<feature type="propeptide" id="PRO_0000435070" evidence="3">
    <location>
        <begin position="22"/>
        <end position="50"/>
    </location>
</feature>
<feature type="chain" id="PRO_0000435071" description="Teretoxin Tan6.2">
    <location>
        <begin position="51"/>
        <end position="91"/>
    </location>
</feature>
<protein>
    <recommendedName>
        <fullName evidence="2">Teretoxin Tan6.2</fullName>
    </recommendedName>
</protein>
<dbReference type="GO" id="GO:0005576">
    <property type="term" value="C:extracellular region"/>
    <property type="evidence" value="ECO:0007669"/>
    <property type="project" value="UniProtKB-SubCell"/>
</dbReference>
<dbReference type="GO" id="GO:0090729">
    <property type="term" value="F:toxin activity"/>
    <property type="evidence" value="ECO:0007669"/>
    <property type="project" value="UniProtKB-KW"/>
</dbReference>
<comment type="subcellular location">
    <subcellularLocation>
        <location evidence="4">Secreted</location>
    </subcellularLocation>
</comment>
<comment type="tissue specificity">
    <text evidence="4">Expressed by the venom duct.</text>
</comment>
<comment type="domain">
    <text>The cysteine framework is VI/VII (C-C-CC-C-C).</text>
</comment>
<comment type="PTM">
    <text evidence="3">Contains 3 disulfide bonds.</text>
</comment>
<comment type="similarity">
    <text>Belongs to the teretoxin M (TM) superfamily.</text>
</comment>
<name>T62_TERAN</name>
<evidence type="ECO:0000255" key="1"/>
<evidence type="ECO:0000303" key="2">
    <source>
    </source>
</evidence>
<evidence type="ECO:0000305" key="3"/>
<evidence type="ECO:0000305" key="4">
    <source>
    </source>
</evidence>